<accession>Q5JGX5</accession>
<feature type="chain" id="PRO_0000166987" description="Probable glycine dehydrogenase (decarboxylating) subunit 1">
    <location>
        <begin position="1"/>
        <end position="451"/>
    </location>
</feature>
<comment type="function">
    <text evidence="1">The glycine cleavage system catalyzes the degradation of glycine. The P protein binds the alpha-amino group of glycine through its pyridoxal phosphate cofactor; CO(2) is released and the remaining methylamine moiety is then transferred to the lipoamide cofactor of the H protein.</text>
</comment>
<comment type="catalytic activity">
    <reaction evidence="1">
        <text>N(6)-[(R)-lipoyl]-L-lysyl-[glycine-cleavage complex H protein] + glycine + H(+) = N(6)-[(R)-S(8)-aminomethyldihydrolipoyl]-L-lysyl-[glycine-cleavage complex H protein] + CO2</text>
        <dbReference type="Rhea" id="RHEA:24304"/>
        <dbReference type="Rhea" id="RHEA-COMP:10494"/>
        <dbReference type="Rhea" id="RHEA-COMP:10495"/>
        <dbReference type="ChEBI" id="CHEBI:15378"/>
        <dbReference type="ChEBI" id="CHEBI:16526"/>
        <dbReference type="ChEBI" id="CHEBI:57305"/>
        <dbReference type="ChEBI" id="CHEBI:83099"/>
        <dbReference type="ChEBI" id="CHEBI:83143"/>
        <dbReference type="EC" id="1.4.4.2"/>
    </reaction>
</comment>
<comment type="subunit">
    <text evidence="1">The glycine cleavage system is composed of four proteins: P, T, L and H. In this organism, the P 'protein' is a heterodimer of two subunits.</text>
</comment>
<comment type="similarity">
    <text evidence="1">Belongs to the GcvP family. N-terminal subunit subfamily.</text>
</comment>
<sequence>MGKHYIPNSAHKDEMLKEIGFSSIEDLFSDVPKGMVKEFNLPEGKSEYEVFTELNETLSKNKTVLEMPSFLGAGTYFHYVPAHVKYLIERSEFLTAYTPYQPEISQGMLQALFEYQSLIAELVGLPIVNSSMYDWGTAMAEAALMSARVTKRNKFVVPKHLSPEKKLVLKTYTAGPGLETVEVPWDERGQMDIEKLKEAVEGAAGVYIEMPNFFGLLEENIREIGEIAHDAGALFVVGVDPTILGIVEAPGELGADIVVGEAAYFGNPMNFGGPRAGIFAVRNDRKLIRQMPGRIIGMTKDADGKRAFVMTLQTREQHIRRAKATSNICSNEALVAVAAAIHLATLGPKGVRELGEVILKNTAYLKKRLAEVGEIVFDGVNFKDVPVRFEVPYSVIHERLLERNIHGGYYIGKHFQELGETALFAATETTRKEWVDGLVDALREIIGEAEL</sequence>
<reference key="1">
    <citation type="journal article" date="2005" name="Genome Res.">
        <title>Complete genome sequence of the hyperthermophilic archaeon Thermococcus kodakaraensis KOD1 and comparison with Pyrococcus genomes.</title>
        <authorList>
            <person name="Fukui T."/>
            <person name="Atomi H."/>
            <person name="Kanai T."/>
            <person name="Matsumi R."/>
            <person name="Fujiwara S."/>
            <person name="Imanaka T."/>
        </authorList>
    </citation>
    <scope>NUCLEOTIDE SEQUENCE [LARGE SCALE GENOMIC DNA]</scope>
    <source>
        <strain>ATCC BAA-918 / JCM 12380 / KOD1</strain>
    </source>
</reference>
<proteinExistence type="inferred from homology"/>
<keyword id="KW-0560">Oxidoreductase</keyword>
<keyword id="KW-1185">Reference proteome</keyword>
<dbReference type="EC" id="1.4.4.2" evidence="1"/>
<dbReference type="EMBL" id="AP006878">
    <property type="protein sequence ID" value="BAD85569.1"/>
    <property type="molecule type" value="Genomic_DNA"/>
</dbReference>
<dbReference type="RefSeq" id="WP_011250331.1">
    <property type="nucleotide sequence ID" value="NC_006624.1"/>
</dbReference>
<dbReference type="SMR" id="Q5JGX5"/>
<dbReference type="STRING" id="69014.TK1380"/>
<dbReference type="EnsemblBacteria" id="BAD85569">
    <property type="protein sequence ID" value="BAD85569"/>
    <property type="gene ID" value="TK1380"/>
</dbReference>
<dbReference type="GeneID" id="78447900"/>
<dbReference type="KEGG" id="tko:TK1380"/>
<dbReference type="PATRIC" id="fig|69014.16.peg.1342"/>
<dbReference type="eggNOG" id="arCOG00077">
    <property type="taxonomic scope" value="Archaea"/>
</dbReference>
<dbReference type="HOGENOM" id="CLU_004620_0_2_2"/>
<dbReference type="InParanoid" id="Q5JGX5"/>
<dbReference type="OrthoDB" id="17655at2157"/>
<dbReference type="PhylomeDB" id="Q5JGX5"/>
<dbReference type="Proteomes" id="UP000000536">
    <property type="component" value="Chromosome"/>
</dbReference>
<dbReference type="GO" id="GO:0004375">
    <property type="term" value="F:glycine dehydrogenase (decarboxylating) activity"/>
    <property type="evidence" value="ECO:0007669"/>
    <property type="project" value="UniProtKB-EC"/>
</dbReference>
<dbReference type="GO" id="GO:0019464">
    <property type="term" value="P:glycine decarboxylation via glycine cleavage system"/>
    <property type="evidence" value="ECO:0007669"/>
    <property type="project" value="UniProtKB-UniRule"/>
</dbReference>
<dbReference type="GO" id="GO:0009116">
    <property type="term" value="P:nucleoside metabolic process"/>
    <property type="evidence" value="ECO:0007669"/>
    <property type="project" value="InterPro"/>
</dbReference>
<dbReference type="CDD" id="cd00613">
    <property type="entry name" value="GDC-P"/>
    <property type="match status" value="1"/>
</dbReference>
<dbReference type="Gene3D" id="3.90.1150.10">
    <property type="entry name" value="Aspartate Aminotransferase, domain 1"/>
    <property type="match status" value="1"/>
</dbReference>
<dbReference type="Gene3D" id="3.40.640.10">
    <property type="entry name" value="Type I PLP-dependent aspartate aminotransferase-like (Major domain)"/>
    <property type="match status" value="1"/>
</dbReference>
<dbReference type="HAMAP" id="MF_00712">
    <property type="entry name" value="GcvPA"/>
    <property type="match status" value="1"/>
</dbReference>
<dbReference type="InterPro" id="IPR023010">
    <property type="entry name" value="GcvPA"/>
</dbReference>
<dbReference type="InterPro" id="IPR049315">
    <property type="entry name" value="GDC-P_N"/>
</dbReference>
<dbReference type="InterPro" id="IPR020581">
    <property type="entry name" value="GDC_P"/>
</dbReference>
<dbReference type="InterPro" id="IPR015424">
    <property type="entry name" value="PyrdxlP-dep_Trfase"/>
</dbReference>
<dbReference type="InterPro" id="IPR015421">
    <property type="entry name" value="PyrdxlP-dep_Trfase_major"/>
</dbReference>
<dbReference type="InterPro" id="IPR015422">
    <property type="entry name" value="PyrdxlP-dep_Trfase_small"/>
</dbReference>
<dbReference type="NCBIfam" id="NF001696">
    <property type="entry name" value="PRK00451.1"/>
    <property type="match status" value="1"/>
</dbReference>
<dbReference type="PANTHER" id="PTHR42806">
    <property type="entry name" value="GLYCINE CLEAVAGE SYSTEM P-PROTEIN"/>
    <property type="match status" value="1"/>
</dbReference>
<dbReference type="PANTHER" id="PTHR42806:SF1">
    <property type="entry name" value="GLYCINE DEHYDROGENASE (DECARBOXYLATING)"/>
    <property type="match status" value="1"/>
</dbReference>
<dbReference type="Pfam" id="PF02347">
    <property type="entry name" value="GDC-P"/>
    <property type="match status" value="1"/>
</dbReference>
<dbReference type="PIRSF" id="PIRSF006815">
    <property type="entry name" value="GcvPA"/>
    <property type="match status" value="1"/>
</dbReference>
<dbReference type="SUPFAM" id="SSF53383">
    <property type="entry name" value="PLP-dependent transferases"/>
    <property type="match status" value="1"/>
</dbReference>
<evidence type="ECO:0000255" key="1">
    <source>
        <dbReference type="HAMAP-Rule" id="MF_00712"/>
    </source>
</evidence>
<name>GCSPA_THEKO</name>
<protein>
    <recommendedName>
        <fullName evidence="1">Probable glycine dehydrogenase (decarboxylating) subunit 1</fullName>
        <ecNumber evidence="1">1.4.4.2</ecNumber>
    </recommendedName>
    <alternativeName>
        <fullName evidence="1">Glycine cleavage system P-protein subunit 1</fullName>
    </alternativeName>
    <alternativeName>
        <fullName evidence="1">Glycine decarboxylase subunit 1</fullName>
    </alternativeName>
    <alternativeName>
        <fullName evidence="1">Glycine dehydrogenase (aminomethyl-transferring) subunit 1</fullName>
    </alternativeName>
</protein>
<organism>
    <name type="scientific">Thermococcus kodakarensis (strain ATCC BAA-918 / JCM 12380 / KOD1)</name>
    <name type="common">Pyrococcus kodakaraensis (strain KOD1)</name>
    <dbReference type="NCBI Taxonomy" id="69014"/>
    <lineage>
        <taxon>Archaea</taxon>
        <taxon>Methanobacteriati</taxon>
        <taxon>Methanobacteriota</taxon>
        <taxon>Thermococci</taxon>
        <taxon>Thermococcales</taxon>
        <taxon>Thermococcaceae</taxon>
        <taxon>Thermococcus</taxon>
    </lineage>
</organism>
<gene>
    <name evidence="1" type="primary">gcvPA</name>
    <name type="ordered locus">TK1380</name>
</gene>